<evidence type="ECO:0000255" key="1">
    <source>
        <dbReference type="HAMAP-Rule" id="MF_00454"/>
    </source>
</evidence>
<name>FLUC_MARN8</name>
<reference key="1">
    <citation type="journal article" date="2011" name="Appl. Environ. Microbiol.">
        <title>Genomic potential of Marinobacter aquaeolei, a biogeochemical 'opportunitroph'.</title>
        <authorList>
            <person name="Singer E."/>
            <person name="Webb E.A."/>
            <person name="Nelson W.C."/>
            <person name="Heidelberg J.F."/>
            <person name="Ivanova N."/>
            <person name="Pati A."/>
            <person name="Edwards K.J."/>
        </authorList>
    </citation>
    <scope>NUCLEOTIDE SEQUENCE [LARGE SCALE GENOMIC DNA]</scope>
    <source>
        <strain>ATCC 700491 / DSM 11845 / VT8</strain>
    </source>
</reference>
<feature type="chain" id="PRO_1000026398" description="Fluoride-specific ion channel FluC">
    <location>
        <begin position="1"/>
        <end position="126"/>
    </location>
</feature>
<feature type="transmembrane region" description="Helical" evidence="1">
    <location>
        <begin position="5"/>
        <end position="25"/>
    </location>
</feature>
<feature type="transmembrane region" description="Helical" evidence="1">
    <location>
        <begin position="35"/>
        <end position="55"/>
    </location>
</feature>
<feature type="transmembrane region" description="Helical" evidence="1">
    <location>
        <begin position="68"/>
        <end position="88"/>
    </location>
</feature>
<feature type="transmembrane region" description="Helical" evidence="1">
    <location>
        <begin position="99"/>
        <end position="119"/>
    </location>
</feature>
<feature type="binding site" evidence="1">
    <location>
        <position position="75"/>
    </location>
    <ligand>
        <name>Na(+)</name>
        <dbReference type="ChEBI" id="CHEBI:29101"/>
        <note>structural</note>
    </ligand>
</feature>
<feature type="binding site" evidence="1">
    <location>
        <position position="78"/>
    </location>
    <ligand>
        <name>Na(+)</name>
        <dbReference type="ChEBI" id="CHEBI:29101"/>
        <note>structural</note>
    </ligand>
</feature>
<gene>
    <name evidence="1" type="primary">fluC</name>
    <name evidence="1" type="synonym">crcB</name>
    <name type="ordered locus">Maqu_3613</name>
</gene>
<protein>
    <recommendedName>
        <fullName evidence="1">Fluoride-specific ion channel FluC</fullName>
    </recommendedName>
</protein>
<proteinExistence type="inferred from homology"/>
<sequence>MWWSVLAVSVGAVIGANLRWGLGLWLNASYHAVPWGTLVANLSGGWLIGVLMAFFSQSSVLSPEWRLFAVTGLCGALTTFSTFSLEMFAALQEGKWGMALVGILAHVVGSILMTALGFLTFSLVRG</sequence>
<comment type="function">
    <text evidence="1">Fluoride-specific ion channel. Important for reducing fluoride concentration in the cell, thus reducing its toxicity.</text>
</comment>
<comment type="catalytic activity">
    <reaction evidence="1">
        <text>fluoride(in) = fluoride(out)</text>
        <dbReference type="Rhea" id="RHEA:76159"/>
        <dbReference type="ChEBI" id="CHEBI:17051"/>
    </reaction>
    <physiologicalReaction direction="left-to-right" evidence="1">
        <dbReference type="Rhea" id="RHEA:76160"/>
    </physiologicalReaction>
</comment>
<comment type="activity regulation">
    <text evidence="1">Na(+) is not transported, but it plays an essential structural role and its presence is essential for fluoride channel function.</text>
</comment>
<comment type="subcellular location">
    <subcellularLocation>
        <location evidence="1">Cell inner membrane</location>
        <topology evidence="1">Multi-pass membrane protein</topology>
    </subcellularLocation>
</comment>
<comment type="similarity">
    <text evidence="1">Belongs to the fluoride channel Fluc/FEX (TC 1.A.43) family.</text>
</comment>
<accession>A1U6R3</accession>
<keyword id="KW-0997">Cell inner membrane</keyword>
<keyword id="KW-1003">Cell membrane</keyword>
<keyword id="KW-0407">Ion channel</keyword>
<keyword id="KW-0406">Ion transport</keyword>
<keyword id="KW-0472">Membrane</keyword>
<keyword id="KW-0479">Metal-binding</keyword>
<keyword id="KW-0915">Sodium</keyword>
<keyword id="KW-0812">Transmembrane</keyword>
<keyword id="KW-1133">Transmembrane helix</keyword>
<keyword id="KW-0813">Transport</keyword>
<organism>
    <name type="scientific">Marinobacter nauticus (strain ATCC 700491 / DSM 11845 / VT8)</name>
    <name type="common">Marinobacter aquaeolei</name>
    <dbReference type="NCBI Taxonomy" id="351348"/>
    <lineage>
        <taxon>Bacteria</taxon>
        <taxon>Pseudomonadati</taxon>
        <taxon>Pseudomonadota</taxon>
        <taxon>Gammaproteobacteria</taxon>
        <taxon>Pseudomonadales</taxon>
        <taxon>Marinobacteraceae</taxon>
        <taxon>Marinobacter</taxon>
    </lineage>
</organism>
<dbReference type="EMBL" id="CP000514">
    <property type="protein sequence ID" value="ABM20682.1"/>
    <property type="molecule type" value="Genomic_DNA"/>
</dbReference>
<dbReference type="RefSeq" id="WP_011787020.1">
    <property type="nucleotide sequence ID" value="NC_008740.1"/>
</dbReference>
<dbReference type="SMR" id="A1U6R3"/>
<dbReference type="STRING" id="351348.Maqu_3613"/>
<dbReference type="KEGG" id="maq:Maqu_3613"/>
<dbReference type="eggNOG" id="COG0239">
    <property type="taxonomic scope" value="Bacteria"/>
</dbReference>
<dbReference type="HOGENOM" id="CLU_114342_3_3_6"/>
<dbReference type="OrthoDB" id="9806299at2"/>
<dbReference type="Proteomes" id="UP000000998">
    <property type="component" value="Chromosome"/>
</dbReference>
<dbReference type="GO" id="GO:0005886">
    <property type="term" value="C:plasma membrane"/>
    <property type="evidence" value="ECO:0007669"/>
    <property type="project" value="UniProtKB-SubCell"/>
</dbReference>
<dbReference type="GO" id="GO:0062054">
    <property type="term" value="F:fluoride channel activity"/>
    <property type="evidence" value="ECO:0007669"/>
    <property type="project" value="UniProtKB-UniRule"/>
</dbReference>
<dbReference type="GO" id="GO:0046872">
    <property type="term" value="F:metal ion binding"/>
    <property type="evidence" value="ECO:0007669"/>
    <property type="project" value="UniProtKB-KW"/>
</dbReference>
<dbReference type="GO" id="GO:0140114">
    <property type="term" value="P:cellular detoxification of fluoride"/>
    <property type="evidence" value="ECO:0007669"/>
    <property type="project" value="UniProtKB-UniRule"/>
</dbReference>
<dbReference type="HAMAP" id="MF_00454">
    <property type="entry name" value="FluC"/>
    <property type="match status" value="1"/>
</dbReference>
<dbReference type="InterPro" id="IPR003691">
    <property type="entry name" value="FluC"/>
</dbReference>
<dbReference type="NCBIfam" id="TIGR00494">
    <property type="entry name" value="crcB"/>
    <property type="match status" value="1"/>
</dbReference>
<dbReference type="NCBIfam" id="NF010792">
    <property type="entry name" value="PRK14196.1"/>
    <property type="match status" value="1"/>
</dbReference>
<dbReference type="PANTHER" id="PTHR28259">
    <property type="entry name" value="FLUORIDE EXPORT PROTEIN 1-RELATED"/>
    <property type="match status" value="1"/>
</dbReference>
<dbReference type="PANTHER" id="PTHR28259:SF1">
    <property type="entry name" value="FLUORIDE EXPORT PROTEIN 1-RELATED"/>
    <property type="match status" value="1"/>
</dbReference>
<dbReference type="Pfam" id="PF02537">
    <property type="entry name" value="CRCB"/>
    <property type="match status" value="1"/>
</dbReference>